<protein>
    <recommendedName>
        <fullName evidence="1">Carbamoyl phosphate synthase small chain</fullName>
        <ecNumber evidence="1">6.3.5.5</ecNumber>
    </recommendedName>
    <alternativeName>
        <fullName evidence="1">Carbamoyl phosphate synthetase glutamine chain</fullName>
    </alternativeName>
</protein>
<sequence>MTKRILVLEDGTVFEGKAFGADIDVTGEIVFNTGMTGYQESITDQSYNGQILTFTYPLVGNYGINRDDYESIIPTCKGVVVFEEARRASNWRNQMTLDEFLKAKKIPGISGIDTRALTKIIRKHGTMRATLTHVGDSMDHVTDQLQATVLPTDNIKQVSTKTSYPAPGVGLSVVLVDFGLKHSILRELSKRNCNVTVVPYSTTAEEILHLNPDGVMLSNGPGNPEDVPQALDMIRGVQGKIPIFGICMGHQLFAMANGAKTYKMKFGHRGFNHAVREIATGRVDFTSQNHGYAVSREDLPEHLIITHEEINDKSVEGVRHRYQPAFSVQYHPDAAPGPHDASYLFDEFIEMMEVFKQSN</sequence>
<proteinExistence type="inferred from homology"/>
<comment type="function">
    <text evidence="1">Small subunit of the glutamine-dependent carbamoyl phosphate synthetase (CPSase). CPSase catalyzes the formation of carbamoyl phosphate from the ammonia moiety of glutamine, carbonate, and phosphate donated by ATP, constituting the first step of 2 biosynthetic pathways, one leading to arginine and/or urea and the other to pyrimidine nucleotides. The small subunit (glutamine amidotransferase) binds and cleaves glutamine to supply the large subunit with the substrate ammonia.</text>
</comment>
<comment type="catalytic activity">
    <reaction evidence="1">
        <text>hydrogencarbonate + L-glutamine + 2 ATP + H2O = carbamoyl phosphate + L-glutamate + 2 ADP + phosphate + 2 H(+)</text>
        <dbReference type="Rhea" id="RHEA:18633"/>
        <dbReference type="ChEBI" id="CHEBI:15377"/>
        <dbReference type="ChEBI" id="CHEBI:15378"/>
        <dbReference type="ChEBI" id="CHEBI:17544"/>
        <dbReference type="ChEBI" id="CHEBI:29985"/>
        <dbReference type="ChEBI" id="CHEBI:30616"/>
        <dbReference type="ChEBI" id="CHEBI:43474"/>
        <dbReference type="ChEBI" id="CHEBI:58228"/>
        <dbReference type="ChEBI" id="CHEBI:58359"/>
        <dbReference type="ChEBI" id="CHEBI:456216"/>
        <dbReference type="EC" id="6.3.5.5"/>
    </reaction>
</comment>
<comment type="catalytic activity">
    <molecule>Carbamoyl phosphate synthase small chain</molecule>
    <reaction evidence="1">
        <text>L-glutamine + H2O = L-glutamate + NH4(+)</text>
        <dbReference type="Rhea" id="RHEA:15889"/>
        <dbReference type="ChEBI" id="CHEBI:15377"/>
        <dbReference type="ChEBI" id="CHEBI:28938"/>
        <dbReference type="ChEBI" id="CHEBI:29985"/>
        <dbReference type="ChEBI" id="CHEBI:58359"/>
    </reaction>
</comment>
<comment type="pathway">
    <text evidence="1">Amino-acid biosynthesis; L-arginine biosynthesis; carbamoyl phosphate from bicarbonate: step 1/1.</text>
</comment>
<comment type="pathway">
    <text evidence="1">Pyrimidine metabolism; UMP biosynthesis via de novo pathway; (S)-dihydroorotate from bicarbonate: step 1/3.</text>
</comment>
<comment type="subunit">
    <text evidence="1">Composed of two chains; the small (or glutamine) chain promotes the hydrolysis of glutamine to ammonia, which is used by the large (or ammonia) chain to synthesize carbamoyl phosphate. Tetramer of heterodimers (alpha,beta)4.</text>
</comment>
<comment type="similarity">
    <text evidence="1">Belongs to the CarA family.</text>
</comment>
<gene>
    <name evidence="1" type="primary">carA</name>
    <name type="ordered locus">spr1154</name>
</gene>
<evidence type="ECO:0000255" key="1">
    <source>
        <dbReference type="HAMAP-Rule" id="MF_01209"/>
    </source>
</evidence>
<reference key="1">
    <citation type="journal article" date="2001" name="J. Bacteriol.">
        <title>Genome of the bacterium Streptococcus pneumoniae strain R6.</title>
        <authorList>
            <person name="Hoskins J."/>
            <person name="Alborn W.E. Jr."/>
            <person name="Arnold J."/>
            <person name="Blaszczak L.C."/>
            <person name="Burgett S."/>
            <person name="DeHoff B.S."/>
            <person name="Estrem S.T."/>
            <person name="Fritz L."/>
            <person name="Fu D.-J."/>
            <person name="Fuller W."/>
            <person name="Geringer C."/>
            <person name="Gilmour R."/>
            <person name="Glass J.S."/>
            <person name="Khoja H."/>
            <person name="Kraft A.R."/>
            <person name="Lagace R.E."/>
            <person name="LeBlanc D.J."/>
            <person name="Lee L.N."/>
            <person name="Lefkowitz E.J."/>
            <person name="Lu J."/>
            <person name="Matsushima P."/>
            <person name="McAhren S.M."/>
            <person name="McHenney M."/>
            <person name="McLeaster K."/>
            <person name="Mundy C.W."/>
            <person name="Nicas T.I."/>
            <person name="Norris F.H."/>
            <person name="O'Gara M."/>
            <person name="Peery R.B."/>
            <person name="Robertson G.T."/>
            <person name="Rockey P."/>
            <person name="Sun P.-M."/>
            <person name="Winkler M.E."/>
            <person name="Yang Y."/>
            <person name="Young-Bellido M."/>
            <person name="Zhao G."/>
            <person name="Zook C.A."/>
            <person name="Baltz R.H."/>
            <person name="Jaskunas S.R."/>
            <person name="Rosteck P.R. Jr."/>
            <person name="Skatrud P.L."/>
            <person name="Glass J.I."/>
        </authorList>
    </citation>
    <scope>NUCLEOTIDE SEQUENCE [LARGE SCALE GENOMIC DNA]</scope>
    <source>
        <strain>ATCC BAA-255 / R6</strain>
    </source>
</reference>
<organism>
    <name type="scientific">Streptococcus pneumoniae (strain ATCC BAA-255 / R6)</name>
    <dbReference type="NCBI Taxonomy" id="171101"/>
    <lineage>
        <taxon>Bacteria</taxon>
        <taxon>Bacillati</taxon>
        <taxon>Bacillota</taxon>
        <taxon>Bacilli</taxon>
        <taxon>Lactobacillales</taxon>
        <taxon>Streptococcaceae</taxon>
        <taxon>Streptococcus</taxon>
    </lineage>
</organism>
<keyword id="KW-0028">Amino-acid biosynthesis</keyword>
<keyword id="KW-0055">Arginine biosynthesis</keyword>
<keyword id="KW-0067">ATP-binding</keyword>
<keyword id="KW-0315">Glutamine amidotransferase</keyword>
<keyword id="KW-0436">Ligase</keyword>
<keyword id="KW-0547">Nucleotide-binding</keyword>
<keyword id="KW-0665">Pyrimidine biosynthesis</keyword>
<keyword id="KW-1185">Reference proteome</keyword>
<dbReference type="EC" id="6.3.5.5" evidence="1"/>
<dbReference type="EMBL" id="AE007317">
    <property type="protein sequence ID" value="AAK99957.1"/>
    <property type="molecule type" value="Genomic_DNA"/>
</dbReference>
<dbReference type="PIR" id="A98016">
    <property type="entry name" value="A98016"/>
</dbReference>
<dbReference type="RefSeq" id="NP_358747.1">
    <property type="nucleotide sequence ID" value="NC_003098.1"/>
</dbReference>
<dbReference type="RefSeq" id="WP_000166701.1">
    <property type="nucleotide sequence ID" value="NC_003098.1"/>
</dbReference>
<dbReference type="SMR" id="P63734"/>
<dbReference type="STRING" id="171101.spr1154"/>
<dbReference type="KEGG" id="spr:spr1154"/>
<dbReference type="PATRIC" id="fig|171101.6.peg.1252"/>
<dbReference type="eggNOG" id="COG0505">
    <property type="taxonomic scope" value="Bacteria"/>
</dbReference>
<dbReference type="HOGENOM" id="CLU_035901_2_1_9"/>
<dbReference type="UniPathway" id="UPA00068">
    <property type="reaction ID" value="UER00171"/>
</dbReference>
<dbReference type="UniPathway" id="UPA00070">
    <property type="reaction ID" value="UER00115"/>
</dbReference>
<dbReference type="Proteomes" id="UP000000586">
    <property type="component" value="Chromosome"/>
</dbReference>
<dbReference type="GO" id="GO:0005951">
    <property type="term" value="C:carbamoyl-phosphate synthase complex"/>
    <property type="evidence" value="ECO:0000318"/>
    <property type="project" value="GO_Central"/>
</dbReference>
<dbReference type="GO" id="GO:0005737">
    <property type="term" value="C:cytoplasm"/>
    <property type="evidence" value="ECO:0000318"/>
    <property type="project" value="GO_Central"/>
</dbReference>
<dbReference type="GO" id="GO:0005524">
    <property type="term" value="F:ATP binding"/>
    <property type="evidence" value="ECO:0007669"/>
    <property type="project" value="UniProtKB-UniRule"/>
</dbReference>
<dbReference type="GO" id="GO:0004088">
    <property type="term" value="F:carbamoyl-phosphate synthase (glutamine-hydrolyzing) activity"/>
    <property type="evidence" value="ECO:0007669"/>
    <property type="project" value="UniProtKB-UniRule"/>
</dbReference>
<dbReference type="GO" id="GO:0004359">
    <property type="term" value="F:glutaminase activity"/>
    <property type="evidence" value="ECO:0007669"/>
    <property type="project" value="RHEA"/>
</dbReference>
<dbReference type="GO" id="GO:0006207">
    <property type="term" value="P:'de novo' pyrimidine nucleobase biosynthetic process"/>
    <property type="evidence" value="ECO:0007669"/>
    <property type="project" value="InterPro"/>
</dbReference>
<dbReference type="GO" id="GO:0044205">
    <property type="term" value="P:'de novo' UMP biosynthetic process"/>
    <property type="evidence" value="ECO:0007669"/>
    <property type="project" value="UniProtKB-UniRule"/>
</dbReference>
<dbReference type="GO" id="GO:0006541">
    <property type="term" value="P:glutamine metabolic process"/>
    <property type="evidence" value="ECO:0007669"/>
    <property type="project" value="InterPro"/>
</dbReference>
<dbReference type="GO" id="GO:0006526">
    <property type="term" value="P:L-arginine biosynthetic process"/>
    <property type="evidence" value="ECO:0000318"/>
    <property type="project" value="GO_Central"/>
</dbReference>
<dbReference type="CDD" id="cd01744">
    <property type="entry name" value="GATase1_CPSase"/>
    <property type="match status" value="1"/>
</dbReference>
<dbReference type="FunFam" id="3.40.50.880:FF:000029">
    <property type="entry name" value="Carbamoyl-phosphate synthase small chain"/>
    <property type="match status" value="1"/>
</dbReference>
<dbReference type="FunFam" id="3.50.30.20:FF:000001">
    <property type="entry name" value="Carbamoyl-phosphate synthase small chain"/>
    <property type="match status" value="1"/>
</dbReference>
<dbReference type="Gene3D" id="3.40.50.880">
    <property type="match status" value="1"/>
</dbReference>
<dbReference type="Gene3D" id="3.50.30.20">
    <property type="entry name" value="Carbamoyl-phosphate synthase small subunit, N-terminal domain"/>
    <property type="match status" value="1"/>
</dbReference>
<dbReference type="HAMAP" id="MF_01209">
    <property type="entry name" value="CPSase_S_chain"/>
    <property type="match status" value="1"/>
</dbReference>
<dbReference type="InterPro" id="IPR050472">
    <property type="entry name" value="Anth_synth/Amidotransfase"/>
</dbReference>
<dbReference type="InterPro" id="IPR006274">
    <property type="entry name" value="CarbamoylP_synth_ssu"/>
</dbReference>
<dbReference type="InterPro" id="IPR002474">
    <property type="entry name" value="CarbamoylP_synth_ssu_N"/>
</dbReference>
<dbReference type="InterPro" id="IPR036480">
    <property type="entry name" value="CarbP_synth_ssu_N_sf"/>
</dbReference>
<dbReference type="InterPro" id="IPR029062">
    <property type="entry name" value="Class_I_gatase-like"/>
</dbReference>
<dbReference type="InterPro" id="IPR035686">
    <property type="entry name" value="CPSase_GATase1"/>
</dbReference>
<dbReference type="InterPro" id="IPR017926">
    <property type="entry name" value="GATASE"/>
</dbReference>
<dbReference type="NCBIfam" id="TIGR01368">
    <property type="entry name" value="CPSaseIIsmall"/>
    <property type="match status" value="1"/>
</dbReference>
<dbReference type="NCBIfam" id="NF009475">
    <property type="entry name" value="PRK12838.1"/>
    <property type="match status" value="1"/>
</dbReference>
<dbReference type="PANTHER" id="PTHR43418:SF7">
    <property type="entry name" value="CARBAMOYL-PHOSPHATE SYNTHASE SMALL CHAIN"/>
    <property type="match status" value="1"/>
</dbReference>
<dbReference type="PANTHER" id="PTHR43418">
    <property type="entry name" value="MULTIFUNCTIONAL TRYPTOPHAN BIOSYNTHESIS PROTEIN-RELATED"/>
    <property type="match status" value="1"/>
</dbReference>
<dbReference type="Pfam" id="PF00988">
    <property type="entry name" value="CPSase_sm_chain"/>
    <property type="match status" value="1"/>
</dbReference>
<dbReference type="Pfam" id="PF00117">
    <property type="entry name" value="GATase"/>
    <property type="match status" value="1"/>
</dbReference>
<dbReference type="PRINTS" id="PR00097">
    <property type="entry name" value="ANTSNTHASEII"/>
</dbReference>
<dbReference type="PRINTS" id="PR00099">
    <property type="entry name" value="CPSGATASE"/>
</dbReference>
<dbReference type="PRINTS" id="PR00096">
    <property type="entry name" value="GATASE"/>
</dbReference>
<dbReference type="SMART" id="SM01097">
    <property type="entry name" value="CPSase_sm_chain"/>
    <property type="match status" value="1"/>
</dbReference>
<dbReference type="SUPFAM" id="SSF52021">
    <property type="entry name" value="Carbamoyl phosphate synthetase, small subunit N-terminal domain"/>
    <property type="match status" value="1"/>
</dbReference>
<dbReference type="SUPFAM" id="SSF52317">
    <property type="entry name" value="Class I glutamine amidotransferase-like"/>
    <property type="match status" value="1"/>
</dbReference>
<dbReference type="PROSITE" id="PS51273">
    <property type="entry name" value="GATASE_TYPE_1"/>
    <property type="match status" value="1"/>
</dbReference>
<name>CARA_STRR6</name>
<accession>P63734</accession>
<accession>Q97QE3</accession>
<feature type="chain" id="PRO_0000112331" description="Carbamoyl phosphate synthase small chain">
    <location>
        <begin position="1"/>
        <end position="359"/>
    </location>
</feature>
<feature type="domain" description="Glutamine amidotransferase type-1" evidence="1">
    <location>
        <begin position="172"/>
        <end position="358"/>
    </location>
</feature>
<feature type="region of interest" description="CPSase" evidence="1">
    <location>
        <begin position="1"/>
        <end position="169"/>
    </location>
</feature>
<feature type="active site" description="Nucleophile" evidence="1">
    <location>
        <position position="247"/>
    </location>
</feature>
<feature type="active site" evidence="1">
    <location>
        <position position="331"/>
    </location>
</feature>
<feature type="active site" evidence="1">
    <location>
        <position position="333"/>
    </location>
</feature>
<feature type="binding site" evidence="1">
    <location>
        <position position="46"/>
    </location>
    <ligand>
        <name>L-glutamine</name>
        <dbReference type="ChEBI" id="CHEBI:58359"/>
    </ligand>
</feature>
<feature type="binding site" evidence="1">
    <location>
        <position position="220"/>
    </location>
    <ligand>
        <name>L-glutamine</name>
        <dbReference type="ChEBI" id="CHEBI:58359"/>
    </ligand>
</feature>
<feature type="binding site" evidence="1">
    <location>
        <position position="222"/>
    </location>
    <ligand>
        <name>L-glutamine</name>
        <dbReference type="ChEBI" id="CHEBI:58359"/>
    </ligand>
</feature>
<feature type="binding site" evidence="1">
    <location>
        <position position="248"/>
    </location>
    <ligand>
        <name>L-glutamine</name>
        <dbReference type="ChEBI" id="CHEBI:58359"/>
    </ligand>
</feature>
<feature type="binding site" evidence="1">
    <location>
        <position position="251"/>
    </location>
    <ligand>
        <name>L-glutamine</name>
        <dbReference type="ChEBI" id="CHEBI:58359"/>
    </ligand>
</feature>
<feature type="binding site" evidence="1">
    <location>
        <position position="289"/>
    </location>
    <ligand>
        <name>L-glutamine</name>
        <dbReference type="ChEBI" id="CHEBI:58359"/>
    </ligand>
</feature>
<feature type="binding site" evidence="1">
    <location>
        <position position="291"/>
    </location>
    <ligand>
        <name>L-glutamine</name>
        <dbReference type="ChEBI" id="CHEBI:58359"/>
    </ligand>
</feature>
<feature type="binding site" evidence="1">
    <location>
        <position position="292"/>
    </location>
    <ligand>
        <name>L-glutamine</name>
        <dbReference type="ChEBI" id="CHEBI:58359"/>
    </ligand>
</feature>